<organism>
    <name type="scientific">Chromobacterium violaceum (strain ATCC 12472 / DSM 30191 / JCM 1249 / CCUG 213 / NBRC 12614 / NCIMB 9131 / NCTC 9757 / MK)</name>
    <dbReference type="NCBI Taxonomy" id="243365"/>
    <lineage>
        <taxon>Bacteria</taxon>
        <taxon>Pseudomonadati</taxon>
        <taxon>Pseudomonadota</taxon>
        <taxon>Betaproteobacteria</taxon>
        <taxon>Neisseriales</taxon>
        <taxon>Chromobacteriaceae</taxon>
        <taxon>Chromobacterium</taxon>
    </lineage>
</organism>
<accession>Q7NXM2</accession>
<name>SYA_CHRVO</name>
<proteinExistence type="inferred from homology"/>
<sequence length="877" mass="93773">MKTSEIRKKFLDFFASKGHQVVPSSSLIPGNDPTLMFTVAGMVQFKDVFLGFEKRDYTRATTSQKCLRAGGKHNDLENVGYTARHHTFFEMLGNFSFGDYFKRDAITFAWEFLTGEQWLALPKDKLMVTVYATDDEAYDIWHQTVGLPADKIVRIGDNKGAPYASDNFWTMGDTGPCGPCTEIFFDHGPSVAGGPPGSPDEDGDRFMEIWNNVFMQFNRDEAGTLHPLPKPSVDTGMGLERLSTVLQHVKSNYETDALACLVRAAARETGVEYSQDVPSLKVIADHIRACSFMVADGILPSNEGRGYVLRRIARRAIRHGYKLGQKGLFFHKIVADLVAEMGEAYPELREKQAHIEDALRAEEIKFAETLEIGMGLVDSALEGGKTALDGDTIFKLYDTFGFPVDLTADICRERGIHADLEGFERAMEAQRERGRAGSNFKMSGKIAYDGEDTRFHGYDKSSVEAKVLALYKGTDPVDSLSAGDEGIVVLDGTAFYAEGGGQVGDVGEISAAGGIAALFDVADTQKIQGAAFGHKGKLARGALKVGDAVTATIDLHQRQASARNHSATHLLHAALRHVLGGHVVQKGSLVNPERTRFDFAHGEAVTAAQIAELERVVNHVIAANYEVKAELMSMEAAQKSGAMMLFGEKYGDEVRVLTMGDFSAELCGGTHVKRTGDIGLFKIVAEGGVAAGVRRIEAVTGEGALAYIQAQDALIKEAAAALKAQTSDEVLAKIAALQDSAKALEKELAKLKGQLASSAGDSLADAAADINGVKVLAAELPGADNTALRETLDKLKDKLGSAAIVLAAKGDGKVALVAGVTADLTGKLKAGELVNFVAQQVGGKGGGRPDMAQAGGTQPENLDAALNGVQAWVAGKL</sequence>
<keyword id="KW-0030">Aminoacyl-tRNA synthetase</keyword>
<keyword id="KW-0067">ATP-binding</keyword>
<keyword id="KW-0963">Cytoplasm</keyword>
<keyword id="KW-0436">Ligase</keyword>
<keyword id="KW-0479">Metal-binding</keyword>
<keyword id="KW-0547">Nucleotide-binding</keyword>
<keyword id="KW-0648">Protein biosynthesis</keyword>
<keyword id="KW-1185">Reference proteome</keyword>
<keyword id="KW-0694">RNA-binding</keyword>
<keyword id="KW-0820">tRNA-binding</keyword>
<keyword id="KW-0862">Zinc</keyword>
<comment type="function">
    <text evidence="1">Catalyzes the attachment of alanine to tRNA(Ala) in a two-step reaction: alanine is first activated by ATP to form Ala-AMP and then transferred to the acceptor end of tRNA(Ala). Also edits incorrectly charged Ser-tRNA(Ala) and Gly-tRNA(Ala) via its editing domain.</text>
</comment>
<comment type="catalytic activity">
    <reaction evidence="1">
        <text>tRNA(Ala) + L-alanine + ATP = L-alanyl-tRNA(Ala) + AMP + diphosphate</text>
        <dbReference type="Rhea" id="RHEA:12540"/>
        <dbReference type="Rhea" id="RHEA-COMP:9657"/>
        <dbReference type="Rhea" id="RHEA-COMP:9923"/>
        <dbReference type="ChEBI" id="CHEBI:30616"/>
        <dbReference type="ChEBI" id="CHEBI:33019"/>
        <dbReference type="ChEBI" id="CHEBI:57972"/>
        <dbReference type="ChEBI" id="CHEBI:78442"/>
        <dbReference type="ChEBI" id="CHEBI:78497"/>
        <dbReference type="ChEBI" id="CHEBI:456215"/>
        <dbReference type="EC" id="6.1.1.7"/>
    </reaction>
</comment>
<comment type="cofactor">
    <cofactor evidence="1">
        <name>Zn(2+)</name>
        <dbReference type="ChEBI" id="CHEBI:29105"/>
    </cofactor>
    <text evidence="1">Binds 1 zinc ion per subunit.</text>
</comment>
<comment type="subcellular location">
    <subcellularLocation>
        <location evidence="1">Cytoplasm</location>
    </subcellularLocation>
</comment>
<comment type="domain">
    <text evidence="1">Consists of three domains; the N-terminal catalytic domain, the editing domain and the C-terminal C-Ala domain. The editing domain removes incorrectly charged amino acids, while the C-Ala domain, along with tRNA(Ala), serves as a bridge to cooperatively bring together the editing and aminoacylation centers thus stimulating deacylation of misacylated tRNAs.</text>
</comment>
<comment type="similarity">
    <text evidence="1">Belongs to the class-II aminoacyl-tRNA synthetase family.</text>
</comment>
<reference key="1">
    <citation type="journal article" date="2003" name="Proc. Natl. Acad. Sci. U.S.A.">
        <title>The complete genome sequence of Chromobacterium violaceum reveals remarkable and exploitable bacterial adaptability.</title>
        <authorList>
            <person name="Vasconcelos A.T.R."/>
            <person name="de Almeida D.F."/>
            <person name="Hungria M."/>
            <person name="Guimaraes C.T."/>
            <person name="Antonio R.V."/>
            <person name="Almeida F.C."/>
            <person name="de Almeida L.G.P."/>
            <person name="de Almeida R."/>
            <person name="Alves-Gomes J.A."/>
            <person name="Andrade E.M."/>
            <person name="Araripe J."/>
            <person name="de Araujo M.F.F."/>
            <person name="Astolfi-Filho S."/>
            <person name="Azevedo V."/>
            <person name="Baptista A.J."/>
            <person name="Bataus L.A.M."/>
            <person name="Batista J.S."/>
            <person name="Belo A."/>
            <person name="van den Berg C."/>
            <person name="Bogo M."/>
            <person name="Bonatto S."/>
            <person name="Bordignon J."/>
            <person name="Brigido M.M."/>
            <person name="Brito C.A."/>
            <person name="Brocchi M."/>
            <person name="Burity H.A."/>
            <person name="Camargo A.A."/>
            <person name="Cardoso D.D.P."/>
            <person name="Carneiro N.P."/>
            <person name="Carraro D.M."/>
            <person name="Carvalho C.M.B."/>
            <person name="Cascardo J.C.M."/>
            <person name="Cavada B.S."/>
            <person name="Chueire L.M.O."/>
            <person name="Creczynski-Pasa T.B."/>
            <person name="Cunha-Junior N.C."/>
            <person name="Fagundes N."/>
            <person name="Falcao C.L."/>
            <person name="Fantinatti F."/>
            <person name="Farias I.P."/>
            <person name="Felipe M.S.S."/>
            <person name="Ferrari L.P."/>
            <person name="Ferro J.A."/>
            <person name="Ferro M.I.T."/>
            <person name="Franco G.R."/>
            <person name="Freitas N.S.A."/>
            <person name="Furlan L.R."/>
            <person name="Gazzinelli R.T."/>
            <person name="Gomes E.A."/>
            <person name="Goncalves P.R."/>
            <person name="Grangeiro T.B."/>
            <person name="Grattapaglia D."/>
            <person name="Grisard E.C."/>
            <person name="Hanna E.S."/>
            <person name="Jardim S.N."/>
            <person name="Laurino J."/>
            <person name="Leoi L.C.T."/>
            <person name="Lima L.F.A."/>
            <person name="Loureiro M.F."/>
            <person name="Lyra M.C.C.P."/>
            <person name="Madeira H.M.F."/>
            <person name="Manfio G.P."/>
            <person name="Maranhao A.Q."/>
            <person name="Martins W.S."/>
            <person name="di Mauro S.M.Z."/>
            <person name="de Medeiros S.R.B."/>
            <person name="Meissner R.V."/>
            <person name="Moreira M.A.M."/>
            <person name="Nascimento F.F."/>
            <person name="Nicolas M.F."/>
            <person name="Oliveira J.G."/>
            <person name="Oliveira S.C."/>
            <person name="Paixao R.F.C."/>
            <person name="Parente J.A."/>
            <person name="Pedrosa F.O."/>
            <person name="Pena S.D.J."/>
            <person name="Pereira J.O."/>
            <person name="Pereira M."/>
            <person name="Pinto L.S.R.C."/>
            <person name="Pinto L.S."/>
            <person name="Porto J.I.R."/>
            <person name="Potrich D.P."/>
            <person name="Ramalho-Neto C.E."/>
            <person name="Reis A.M.M."/>
            <person name="Rigo L.U."/>
            <person name="Rondinelli E."/>
            <person name="Santos E.B.P."/>
            <person name="Santos F.R."/>
            <person name="Schneider M.P.C."/>
            <person name="Seuanez H.N."/>
            <person name="Silva A.M.R."/>
            <person name="da Silva A.L.C."/>
            <person name="Silva D.W."/>
            <person name="Silva R."/>
            <person name="Simoes I.C."/>
            <person name="Simon D."/>
            <person name="Soares C.M.A."/>
            <person name="Soares R.B.A."/>
            <person name="Souza E.M."/>
            <person name="Souza K.R.L."/>
            <person name="Souza R.C."/>
            <person name="Steffens M.B.R."/>
            <person name="Steindel M."/>
            <person name="Teixeira S.R."/>
            <person name="Urmenyi T."/>
            <person name="Vettore A."/>
            <person name="Wassem R."/>
            <person name="Zaha A."/>
            <person name="Simpson A.J.G."/>
        </authorList>
    </citation>
    <scope>NUCLEOTIDE SEQUENCE [LARGE SCALE GENOMIC DNA]</scope>
    <source>
        <strain>ATCC 12472 / DSM 30191 / JCM 1249 / CCUG 213 / NBRC 12614 / NCIMB 9131 / NCTC 9757 / MK</strain>
    </source>
</reference>
<evidence type="ECO:0000255" key="1">
    <source>
        <dbReference type="HAMAP-Rule" id="MF_00036"/>
    </source>
</evidence>
<protein>
    <recommendedName>
        <fullName evidence="1">Alanine--tRNA ligase</fullName>
        <ecNumber evidence="1">6.1.1.7</ecNumber>
    </recommendedName>
    <alternativeName>
        <fullName evidence="1">Alanyl-tRNA synthetase</fullName>
        <shortName evidence="1">AlaRS</shortName>
    </alternativeName>
</protein>
<gene>
    <name evidence="1" type="primary">alaS</name>
    <name type="ordered locus">CV_1604</name>
</gene>
<feature type="chain" id="PRO_0000075092" description="Alanine--tRNA ligase">
    <location>
        <begin position="1"/>
        <end position="877"/>
    </location>
</feature>
<feature type="binding site" evidence="1">
    <location>
        <position position="565"/>
    </location>
    <ligand>
        <name>Zn(2+)</name>
        <dbReference type="ChEBI" id="CHEBI:29105"/>
    </ligand>
</feature>
<feature type="binding site" evidence="1">
    <location>
        <position position="569"/>
    </location>
    <ligand>
        <name>Zn(2+)</name>
        <dbReference type="ChEBI" id="CHEBI:29105"/>
    </ligand>
</feature>
<feature type="binding site" evidence="1">
    <location>
        <position position="667"/>
    </location>
    <ligand>
        <name>Zn(2+)</name>
        <dbReference type="ChEBI" id="CHEBI:29105"/>
    </ligand>
</feature>
<feature type="binding site" evidence="1">
    <location>
        <position position="671"/>
    </location>
    <ligand>
        <name>Zn(2+)</name>
        <dbReference type="ChEBI" id="CHEBI:29105"/>
    </ligand>
</feature>
<dbReference type="EC" id="6.1.1.7" evidence="1"/>
<dbReference type="EMBL" id="AE016825">
    <property type="protein sequence ID" value="AAQ59280.2"/>
    <property type="molecule type" value="Genomic_DNA"/>
</dbReference>
<dbReference type="RefSeq" id="WP_011135156.1">
    <property type="nucleotide sequence ID" value="NC_005085.1"/>
</dbReference>
<dbReference type="SMR" id="Q7NXM2"/>
<dbReference type="STRING" id="243365.CV_1604"/>
<dbReference type="KEGG" id="cvi:CV_1604"/>
<dbReference type="eggNOG" id="COG0013">
    <property type="taxonomic scope" value="Bacteria"/>
</dbReference>
<dbReference type="HOGENOM" id="CLU_004485_1_1_4"/>
<dbReference type="OrthoDB" id="9803884at2"/>
<dbReference type="Proteomes" id="UP000001424">
    <property type="component" value="Chromosome"/>
</dbReference>
<dbReference type="GO" id="GO:0005829">
    <property type="term" value="C:cytosol"/>
    <property type="evidence" value="ECO:0007669"/>
    <property type="project" value="TreeGrafter"/>
</dbReference>
<dbReference type="GO" id="GO:0004813">
    <property type="term" value="F:alanine-tRNA ligase activity"/>
    <property type="evidence" value="ECO:0007669"/>
    <property type="project" value="UniProtKB-UniRule"/>
</dbReference>
<dbReference type="GO" id="GO:0002161">
    <property type="term" value="F:aminoacyl-tRNA deacylase activity"/>
    <property type="evidence" value="ECO:0007669"/>
    <property type="project" value="TreeGrafter"/>
</dbReference>
<dbReference type="GO" id="GO:0005524">
    <property type="term" value="F:ATP binding"/>
    <property type="evidence" value="ECO:0007669"/>
    <property type="project" value="UniProtKB-UniRule"/>
</dbReference>
<dbReference type="GO" id="GO:0000049">
    <property type="term" value="F:tRNA binding"/>
    <property type="evidence" value="ECO:0007669"/>
    <property type="project" value="UniProtKB-KW"/>
</dbReference>
<dbReference type="GO" id="GO:0008270">
    <property type="term" value="F:zinc ion binding"/>
    <property type="evidence" value="ECO:0007669"/>
    <property type="project" value="UniProtKB-UniRule"/>
</dbReference>
<dbReference type="GO" id="GO:0006419">
    <property type="term" value="P:alanyl-tRNA aminoacylation"/>
    <property type="evidence" value="ECO:0007669"/>
    <property type="project" value="UniProtKB-UniRule"/>
</dbReference>
<dbReference type="GO" id="GO:0045892">
    <property type="term" value="P:negative regulation of DNA-templated transcription"/>
    <property type="evidence" value="ECO:0007669"/>
    <property type="project" value="TreeGrafter"/>
</dbReference>
<dbReference type="CDD" id="cd00673">
    <property type="entry name" value="AlaRS_core"/>
    <property type="match status" value="1"/>
</dbReference>
<dbReference type="FunFam" id="2.40.30.130:FF:000001">
    <property type="entry name" value="Alanine--tRNA ligase"/>
    <property type="match status" value="1"/>
</dbReference>
<dbReference type="FunFam" id="3.10.310.40:FF:000001">
    <property type="entry name" value="Alanine--tRNA ligase"/>
    <property type="match status" value="1"/>
</dbReference>
<dbReference type="FunFam" id="3.30.54.20:FF:000001">
    <property type="entry name" value="Alanine--tRNA ligase"/>
    <property type="match status" value="1"/>
</dbReference>
<dbReference type="FunFam" id="3.30.930.10:FF:000004">
    <property type="entry name" value="Alanine--tRNA ligase"/>
    <property type="match status" value="1"/>
</dbReference>
<dbReference type="FunFam" id="3.30.980.10:FF:000004">
    <property type="entry name" value="Alanine--tRNA ligase, cytoplasmic"/>
    <property type="match status" value="1"/>
</dbReference>
<dbReference type="Gene3D" id="2.40.30.130">
    <property type="match status" value="1"/>
</dbReference>
<dbReference type="Gene3D" id="3.10.310.40">
    <property type="match status" value="1"/>
</dbReference>
<dbReference type="Gene3D" id="3.30.54.20">
    <property type="match status" value="1"/>
</dbReference>
<dbReference type="Gene3D" id="6.10.250.550">
    <property type="match status" value="1"/>
</dbReference>
<dbReference type="Gene3D" id="3.30.930.10">
    <property type="entry name" value="Bira Bifunctional Protein, Domain 2"/>
    <property type="match status" value="1"/>
</dbReference>
<dbReference type="Gene3D" id="3.30.980.10">
    <property type="entry name" value="Threonyl-trna Synthetase, Chain A, domain 2"/>
    <property type="match status" value="1"/>
</dbReference>
<dbReference type="HAMAP" id="MF_00036_B">
    <property type="entry name" value="Ala_tRNA_synth_B"/>
    <property type="match status" value="1"/>
</dbReference>
<dbReference type="InterPro" id="IPR045864">
    <property type="entry name" value="aa-tRNA-synth_II/BPL/LPL"/>
</dbReference>
<dbReference type="InterPro" id="IPR002318">
    <property type="entry name" value="Ala-tRNA-lgiase_IIc"/>
</dbReference>
<dbReference type="InterPro" id="IPR018162">
    <property type="entry name" value="Ala-tRNA-ligase_IIc_anticod-bd"/>
</dbReference>
<dbReference type="InterPro" id="IPR018165">
    <property type="entry name" value="Ala-tRNA-synth_IIc_core"/>
</dbReference>
<dbReference type="InterPro" id="IPR018164">
    <property type="entry name" value="Ala-tRNA-synth_IIc_N"/>
</dbReference>
<dbReference type="InterPro" id="IPR050058">
    <property type="entry name" value="Ala-tRNA_ligase"/>
</dbReference>
<dbReference type="InterPro" id="IPR023033">
    <property type="entry name" value="Ala_tRNA_ligase_euk/bac"/>
</dbReference>
<dbReference type="InterPro" id="IPR003156">
    <property type="entry name" value="DHHA1_dom"/>
</dbReference>
<dbReference type="InterPro" id="IPR018163">
    <property type="entry name" value="Thr/Ala-tRNA-synth_IIc_edit"/>
</dbReference>
<dbReference type="InterPro" id="IPR009000">
    <property type="entry name" value="Transl_B-barrel_sf"/>
</dbReference>
<dbReference type="InterPro" id="IPR012947">
    <property type="entry name" value="tRNA_SAD"/>
</dbReference>
<dbReference type="NCBIfam" id="TIGR00344">
    <property type="entry name" value="alaS"/>
    <property type="match status" value="1"/>
</dbReference>
<dbReference type="PANTHER" id="PTHR11777:SF9">
    <property type="entry name" value="ALANINE--TRNA LIGASE, CYTOPLASMIC"/>
    <property type="match status" value="1"/>
</dbReference>
<dbReference type="PANTHER" id="PTHR11777">
    <property type="entry name" value="ALANYL-TRNA SYNTHETASE"/>
    <property type="match status" value="1"/>
</dbReference>
<dbReference type="Pfam" id="PF02272">
    <property type="entry name" value="DHHA1"/>
    <property type="match status" value="1"/>
</dbReference>
<dbReference type="Pfam" id="PF01411">
    <property type="entry name" value="tRNA-synt_2c"/>
    <property type="match status" value="1"/>
</dbReference>
<dbReference type="Pfam" id="PF07973">
    <property type="entry name" value="tRNA_SAD"/>
    <property type="match status" value="1"/>
</dbReference>
<dbReference type="PRINTS" id="PR00980">
    <property type="entry name" value="TRNASYNTHALA"/>
</dbReference>
<dbReference type="SMART" id="SM00863">
    <property type="entry name" value="tRNA_SAD"/>
    <property type="match status" value="1"/>
</dbReference>
<dbReference type="SUPFAM" id="SSF55681">
    <property type="entry name" value="Class II aaRS and biotin synthetases"/>
    <property type="match status" value="1"/>
</dbReference>
<dbReference type="SUPFAM" id="SSF101353">
    <property type="entry name" value="Putative anticodon-binding domain of alanyl-tRNA synthetase (AlaRS)"/>
    <property type="match status" value="1"/>
</dbReference>
<dbReference type="SUPFAM" id="SSF55186">
    <property type="entry name" value="ThrRS/AlaRS common domain"/>
    <property type="match status" value="1"/>
</dbReference>
<dbReference type="SUPFAM" id="SSF50447">
    <property type="entry name" value="Translation proteins"/>
    <property type="match status" value="1"/>
</dbReference>
<dbReference type="PROSITE" id="PS50860">
    <property type="entry name" value="AA_TRNA_LIGASE_II_ALA"/>
    <property type="match status" value="1"/>
</dbReference>